<evidence type="ECO:0000255" key="1">
    <source>
        <dbReference type="HAMAP-Rule" id="MF_02208"/>
    </source>
</evidence>
<organism>
    <name type="scientific">Xylella fastidiosa (strain 9a5c)</name>
    <dbReference type="NCBI Taxonomy" id="160492"/>
    <lineage>
        <taxon>Bacteria</taxon>
        <taxon>Pseudomonadati</taxon>
        <taxon>Pseudomonadota</taxon>
        <taxon>Gammaproteobacteria</taxon>
        <taxon>Lysobacterales</taxon>
        <taxon>Lysobacteraceae</taxon>
        <taxon>Xylella</taxon>
    </lineage>
</organism>
<protein>
    <recommendedName>
        <fullName evidence="1">UDP-N-acetylmuramoyl-L-alanine--L-glutamate ligase</fullName>
        <ecNumber evidence="1">6.3.2.53</ecNumber>
    </recommendedName>
    <alternativeName>
        <fullName evidence="1">UDP-N-acetylmuramoyl-L-alanyl-L-glutamate synthetase</fullName>
        <shortName evidence="1">UDP-MurNAc-L-Ala-L-Glu synthetase</shortName>
    </alternativeName>
</protein>
<comment type="function">
    <text evidence="1">Cell wall formation. Catalyzes the addition of L-glutamate to the nucleotide precursor UDP-N-acetylmuramoyl-L-alanine.</text>
</comment>
<comment type="catalytic activity">
    <reaction evidence="1">
        <text>UDP-N-acetyl-alpha-D-muramoyl-L-alanine + L-glutamate + ATP = UDP-N-acetyl-alpha-D-muramoyl-L-alanyl-L-glutamate + ADP + phosphate + H(+)</text>
        <dbReference type="Rhea" id="RHEA:58816"/>
        <dbReference type="ChEBI" id="CHEBI:15378"/>
        <dbReference type="ChEBI" id="CHEBI:29985"/>
        <dbReference type="ChEBI" id="CHEBI:30616"/>
        <dbReference type="ChEBI" id="CHEBI:43474"/>
        <dbReference type="ChEBI" id="CHEBI:83898"/>
        <dbReference type="ChEBI" id="CHEBI:142725"/>
        <dbReference type="ChEBI" id="CHEBI:456216"/>
        <dbReference type="EC" id="6.3.2.53"/>
    </reaction>
</comment>
<comment type="pathway">
    <text evidence="1">Cell wall biogenesis; peptidoglycan biosynthesis.</text>
</comment>
<comment type="subcellular location">
    <subcellularLocation>
        <location evidence="1">Cytoplasm</location>
    </subcellularLocation>
</comment>
<comment type="similarity">
    <text evidence="1">Belongs to the MurCDEF family. MurD2 subfamily.</text>
</comment>
<dbReference type="EC" id="6.3.2.53" evidence="1"/>
<dbReference type="EMBL" id="AE003849">
    <property type="protein sequence ID" value="AAF83928.1"/>
    <property type="molecule type" value="Genomic_DNA"/>
</dbReference>
<dbReference type="PIR" id="C82722">
    <property type="entry name" value="C82722"/>
</dbReference>
<dbReference type="SMR" id="Q9PEB0"/>
<dbReference type="STRING" id="160492.XF_1118"/>
<dbReference type="KEGG" id="xfa:XF_1118"/>
<dbReference type="eggNOG" id="COG0771">
    <property type="taxonomic scope" value="Bacteria"/>
</dbReference>
<dbReference type="HOGENOM" id="CLU_032540_4_1_6"/>
<dbReference type="UniPathway" id="UPA00219"/>
<dbReference type="Proteomes" id="UP000000812">
    <property type="component" value="Chromosome"/>
</dbReference>
<dbReference type="GO" id="GO:0005737">
    <property type="term" value="C:cytoplasm"/>
    <property type="evidence" value="ECO:0007669"/>
    <property type="project" value="UniProtKB-SubCell"/>
</dbReference>
<dbReference type="GO" id="GO:0005524">
    <property type="term" value="F:ATP binding"/>
    <property type="evidence" value="ECO:0007669"/>
    <property type="project" value="UniProtKB-UniRule"/>
</dbReference>
<dbReference type="GO" id="GO:0008764">
    <property type="term" value="F:UDP-N-acetylmuramoylalanine-D-glutamate ligase activity"/>
    <property type="evidence" value="ECO:0007669"/>
    <property type="project" value="InterPro"/>
</dbReference>
<dbReference type="GO" id="GO:0051301">
    <property type="term" value="P:cell division"/>
    <property type="evidence" value="ECO:0007669"/>
    <property type="project" value="UniProtKB-KW"/>
</dbReference>
<dbReference type="GO" id="GO:0071555">
    <property type="term" value="P:cell wall organization"/>
    <property type="evidence" value="ECO:0007669"/>
    <property type="project" value="UniProtKB-KW"/>
</dbReference>
<dbReference type="GO" id="GO:0009252">
    <property type="term" value="P:peptidoglycan biosynthetic process"/>
    <property type="evidence" value="ECO:0007669"/>
    <property type="project" value="UniProtKB-UniRule"/>
</dbReference>
<dbReference type="GO" id="GO:0008360">
    <property type="term" value="P:regulation of cell shape"/>
    <property type="evidence" value="ECO:0007669"/>
    <property type="project" value="UniProtKB-KW"/>
</dbReference>
<dbReference type="Gene3D" id="3.90.190.20">
    <property type="entry name" value="Mur ligase, C-terminal domain"/>
    <property type="match status" value="1"/>
</dbReference>
<dbReference type="Gene3D" id="3.40.1190.10">
    <property type="entry name" value="Mur-like, catalytic domain"/>
    <property type="match status" value="1"/>
</dbReference>
<dbReference type="Gene3D" id="3.40.50.720">
    <property type="entry name" value="NAD(P)-binding Rossmann-like Domain"/>
    <property type="match status" value="1"/>
</dbReference>
<dbReference type="HAMAP" id="MF_00639">
    <property type="entry name" value="MurD"/>
    <property type="match status" value="1"/>
</dbReference>
<dbReference type="HAMAP" id="MF_02208">
    <property type="entry name" value="MurD2_subfam"/>
    <property type="match status" value="1"/>
</dbReference>
<dbReference type="InterPro" id="IPR036565">
    <property type="entry name" value="Mur-like_cat_sf"/>
</dbReference>
<dbReference type="InterPro" id="IPR036615">
    <property type="entry name" value="Mur_ligase_C_dom_sf"/>
</dbReference>
<dbReference type="InterPro" id="IPR013221">
    <property type="entry name" value="Mur_ligase_cen"/>
</dbReference>
<dbReference type="InterPro" id="IPR005762">
    <property type="entry name" value="MurD"/>
</dbReference>
<dbReference type="InterPro" id="IPR043687">
    <property type="entry name" value="MurD2"/>
</dbReference>
<dbReference type="NCBIfam" id="TIGR01087">
    <property type="entry name" value="murD"/>
    <property type="match status" value="1"/>
</dbReference>
<dbReference type="PANTHER" id="PTHR43692">
    <property type="entry name" value="UDP-N-ACETYLMURAMOYLALANINE--D-GLUTAMATE LIGASE"/>
    <property type="match status" value="1"/>
</dbReference>
<dbReference type="PANTHER" id="PTHR43692:SF1">
    <property type="entry name" value="UDP-N-ACETYLMURAMOYLALANINE--D-GLUTAMATE LIGASE"/>
    <property type="match status" value="1"/>
</dbReference>
<dbReference type="Pfam" id="PF08245">
    <property type="entry name" value="Mur_ligase_M"/>
    <property type="match status" value="1"/>
</dbReference>
<dbReference type="SUPFAM" id="SSF53623">
    <property type="entry name" value="MurD-like peptide ligases, catalytic domain"/>
    <property type="match status" value="1"/>
</dbReference>
<dbReference type="SUPFAM" id="SSF53244">
    <property type="entry name" value="MurD-like peptide ligases, peptide-binding domain"/>
    <property type="match status" value="1"/>
</dbReference>
<accession>Q9PEB0</accession>
<reference key="1">
    <citation type="journal article" date="2000" name="Nature">
        <title>The genome sequence of the plant pathogen Xylella fastidiosa.</title>
        <authorList>
            <person name="Simpson A.J.G."/>
            <person name="Reinach F.C."/>
            <person name="Arruda P."/>
            <person name="Abreu F.A."/>
            <person name="Acencio M."/>
            <person name="Alvarenga R."/>
            <person name="Alves L.M.C."/>
            <person name="Araya J.E."/>
            <person name="Baia G.S."/>
            <person name="Baptista C.S."/>
            <person name="Barros M.H."/>
            <person name="Bonaccorsi E.D."/>
            <person name="Bordin S."/>
            <person name="Bove J.M."/>
            <person name="Briones M.R.S."/>
            <person name="Bueno M.R.P."/>
            <person name="Camargo A.A."/>
            <person name="Camargo L.E.A."/>
            <person name="Carraro D.M."/>
            <person name="Carrer H."/>
            <person name="Colauto N.B."/>
            <person name="Colombo C."/>
            <person name="Costa F.F."/>
            <person name="Costa M.C.R."/>
            <person name="Costa-Neto C.M."/>
            <person name="Coutinho L.L."/>
            <person name="Cristofani M."/>
            <person name="Dias-Neto E."/>
            <person name="Docena C."/>
            <person name="El-Dorry H."/>
            <person name="Facincani A.P."/>
            <person name="Ferreira A.J.S."/>
            <person name="Ferreira V.C.A."/>
            <person name="Ferro J.A."/>
            <person name="Fraga J.S."/>
            <person name="Franca S.C."/>
            <person name="Franco M.C."/>
            <person name="Frohme M."/>
            <person name="Furlan L.R."/>
            <person name="Garnier M."/>
            <person name="Goldman G.H."/>
            <person name="Goldman M.H.S."/>
            <person name="Gomes S.L."/>
            <person name="Gruber A."/>
            <person name="Ho P.L."/>
            <person name="Hoheisel J.D."/>
            <person name="Junqueira M.L."/>
            <person name="Kemper E.L."/>
            <person name="Kitajima J.P."/>
            <person name="Krieger J.E."/>
            <person name="Kuramae E.E."/>
            <person name="Laigret F."/>
            <person name="Lambais M.R."/>
            <person name="Leite L.C.C."/>
            <person name="Lemos E.G.M."/>
            <person name="Lemos M.V.F."/>
            <person name="Lopes S.A."/>
            <person name="Lopes C.R."/>
            <person name="Machado J.A."/>
            <person name="Machado M.A."/>
            <person name="Madeira A.M.B.N."/>
            <person name="Madeira H.M.F."/>
            <person name="Marino C.L."/>
            <person name="Marques M.V."/>
            <person name="Martins E.A.L."/>
            <person name="Martins E.M.F."/>
            <person name="Matsukuma A.Y."/>
            <person name="Menck C.F.M."/>
            <person name="Miracca E.C."/>
            <person name="Miyaki C.Y."/>
            <person name="Monteiro-Vitorello C.B."/>
            <person name="Moon D.H."/>
            <person name="Nagai M.A."/>
            <person name="Nascimento A.L.T.O."/>
            <person name="Netto L.E.S."/>
            <person name="Nhani A. Jr."/>
            <person name="Nobrega F.G."/>
            <person name="Nunes L.R."/>
            <person name="Oliveira M.A."/>
            <person name="de Oliveira M.C."/>
            <person name="de Oliveira R.C."/>
            <person name="Palmieri D.A."/>
            <person name="Paris A."/>
            <person name="Peixoto B.R."/>
            <person name="Pereira G.A.G."/>
            <person name="Pereira H.A. Jr."/>
            <person name="Pesquero J.B."/>
            <person name="Quaggio R.B."/>
            <person name="Roberto P.G."/>
            <person name="Rodrigues V."/>
            <person name="de Rosa A.J.M."/>
            <person name="de Rosa V.E. Jr."/>
            <person name="de Sa R.G."/>
            <person name="Santelli R.V."/>
            <person name="Sawasaki H.E."/>
            <person name="da Silva A.C.R."/>
            <person name="da Silva A.M."/>
            <person name="da Silva F.R."/>
            <person name="Silva W.A. Jr."/>
            <person name="da Silveira J.F."/>
            <person name="Silvestri M.L.Z."/>
            <person name="Siqueira W.J."/>
            <person name="de Souza A.A."/>
            <person name="de Souza A.P."/>
            <person name="Terenzi M.F."/>
            <person name="Truffi D."/>
            <person name="Tsai S.M."/>
            <person name="Tsuhako M.H."/>
            <person name="Vallada H."/>
            <person name="Van Sluys M.A."/>
            <person name="Verjovski-Almeida S."/>
            <person name="Vettore A.L."/>
            <person name="Zago M.A."/>
            <person name="Zatz M."/>
            <person name="Meidanis J."/>
            <person name="Setubal J.C."/>
        </authorList>
    </citation>
    <scope>NUCLEOTIDE SEQUENCE [LARGE SCALE GENOMIC DNA]</scope>
    <source>
        <strain>9a5c</strain>
    </source>
</reference>
<feature type="chain" id="PRO_0000109130" description="UDP-N-acetylmuramoyl-L-alanine--L-glutamate ligase">
    <location>
        <begin position="1"/>
        <end position="468"/>
    </location>
</feature>
<feature type="binding site" evidence="1">
    <location>
        <begin position="122"/>
        <end position="128"/>
    </location>
    <ligand>
        <name>ATP</name>
        <dbReference type="ChEBI" id="CHEBI:30616"/>
    </ligand>
</feature>
<name>MURD2_XYLFA</name>
<gene>
    <name evidence="1" type="primary">murD2</name>
    <name type="ordered locus">XF_1118</name>
</gene>
<sequence length="468" mass="49502">MRISALEGCRVALWGWGRESRAAYRTFRAAFPKQPLTLFCTIAEATEVQALADPVLSIETEVSVPRLAAFDVVIKSPGISPYSPLAVAATAAGAHFIGGTQLWFAAHADTDGVVPGAVCVTGTKGKSTTTALLAHLLRAAGHCTALAGNIGMPLLELLTPQPTPEYWAIELSSYQTGDVARSGARPVLALVLNVFPEHLDWHGSEQRYINDKLSLVTVTRPRIALLNAADPRLASLALPQSDLRWFNRRDGWHVRGQVVYRGDRAVLDTALIPLPGAHNGSNVCAVLATLEALGLNAVALAPAACNFHPLPNRLQFLGERDGILWVNDSISTTPHATLAALDCFLGRCRVAVLVGGYDRGVDWECFAARITRKVPLDIVTMGANGPHIQALLAPLAAGRFGLHAAVDLPQAVALARTALGAQGGVLLLSPGAPSFGAYQDYVARGRHFAILAGFDPEVISSISGLGIA</sequence>
<keyword id="KW-0067">ATP-binding</keyword>
<keyword id="KW-0131">Cell cycle</keyword>
<keyword id="KW-0132">Cell division</keyword>
<keyword id="KW-0133">Cell shape</keyword>
<keyword id="KW-0961">Cell wall biogenesis/degradation</keyword>
<keyword id="KW-0963">Cytoplasm</keyword>
<keyword id="KW-0436">Ligase</keyword>
<keyword id="KW-0547">Nucleotide-binding</keyword>
<keyword id="KW-0573">Peptidoglycan synthesis</keyword>
<proteinExistence type="inferred from homology"/>